<dbReference type="EMBL" id="CP001176">
    <property type="protein sequence ID" value="ACK59168.1"/>
    <property type="molecule type" value="Genomic_DNA"/>
</dbReference>
<dbReference type="RefSeq" id="WP_000456023.1">
    <property type="nucleotide sequence ID" value="NZ_VEHB01000001.1"/>
</dbReference>
<dbReference type="SMR" id="B7H546"/>
<dbReference type="KEGG" id="bcb:BCB4264_A2269"/>
<dbReference type="HOGENOM" id="CLU_111022_0_0_9"/>
<dbReference type="Proteomes" id="UP000007096">
    <property type="component" value="Chromosome"/>
</dbReference>
<dbReference type="GO" id="GO:0005737">
    <property type="term" value="C:cytoplasm"/>
    <property type="evidence" value="ECO:0007669"/>
    <property type="project" value="UniProtKB-SubCell"/>
</dbReference>
<dbReference type="GO" id="GO:0003690">
    <property type="term" value="F:double-stranded DNA binding"/>
    <property type="evidence" value="ECO:0007669"/>
    <property type="project" value="UniProtKB-UniRule"/>
</dbReference>
<dbReference type="GO" id="GO:0008356">
    <property type="term" value="P:asymmetric cell division"/>
    <property type="evidence" value="ECO:0007669"/>
    <property type="project" value="UniProtKB-UniRule"/>
</dbReference>
<dbReference type="GO" id="GO:0030261">
    <property type="term" value="P:chromosome condensation"/>
    <property type="evidence" value="ECO:0007669"/>
    <property type="project" value="UniProtKB-UniRule"/>
</dbReference>
<dbReference type="GO" id="GO:0007059">
    <property type="term" value="P:chromosome segregation"/>
    <property type="evidence" value="ECO:0007669"/>
    <property type="project" value="UniProtKB-UniRule"/>
</dbReference>
<dbReference type="GO" id="GO:0030435">
    <property type="term" value="P:sporulation resulting in formation of a cellular spore"/>
    <property type="evidence" value="ECO:0007669"/>
    <property type="project" value="UniProtKB-UniRule"/>
</dbReference>
<dbReference type="Gene3D" id="1.10.1660.10">
    <property type="match status" value="1"/>
</dbReference>
<dbReference type="HAMAP" id="MF_01170">
    <property type="entry name" value="RacA"/>
    <property type="match status" value="1"/>
</dbReference>
<dbReference type="InterPro" id="IPR023522">
    <property type="entry name" value="Chrosome_anchoring_RacA"/>
</dbReference>
<dbReference type="NCBIfam" id="NF009646">
    <property type="entry name" value="PRK13182.1-1"/>
    <property type="match status" value="1"/>
</dbReference>
<dbReference type="SUPFAM" id="SSF58064">
    <property type="entry name" value="Influenza hemagglutinin (stalk)"/>
    <property type="match status" value="1"/>
</dbReference>
<protein>
    <recommendedName>
        <fullName evidence="1">Chromosome-anchoring protein RacA</fullName>
    </recommendedName>
</protein>
<name>RACA_BACC4</name>
<evidence type="ECO:0000255" key="1">
    <source>
        <dbReference type="HAMAP-Rule" id="MF_01170"/>
    </source>
</evidence>
<feature type="chain" id="PRO_1000137973" description="Chromosome-anchoring protein RacA">
    <location>
        <begin position="1"/>
        <end position="180"/>
    </location>
</feature>
<feature type="DNA-binding region" description="H-T-H motif" evidence="1">
    <location>
        <begin position="5"/>
        <end position="25"/>
    </location>
</feature>
<feature type="coiled-coil region" evidence="1">
    <location>
        <begin position="67"/>
        <end position="151"/>
    </location>
</feature>
<keyword id="KW-0131">Cell cycle</keyword>
<keyword id="KW-0132">Cell division</keyword>
<keyword id="KW-0159">Chromosome partition</keyword>
<keyword id="KW-0175">Coiled coil</keyword>
<keyword id="KW-0963">Cytoplasm</keyword>
<keyword id="KW-0238">DNA-binding</keyword>
<keyword id="KW-0749">Sporulation</keyword>
<comment type="function">
    <text evidence="1">Required for the formation of axial filaments and for anchoring the origin regions at the cell poles in sporulating cells, thus ensuring proper chromosome segregation in the prespore. Binds in a dispersed manner throughout the chromosome but preferentially to sites clustered in the origin portion of the chromosome, causing condensation of the chromosome and its remodeling into an elongated, anchored structure.</text>
</comment>
<comment type="subcellular location">
    <subcellularLocation>
        <location evidence="1">Cytoplasm</location>
    </subcellularLocation>
    <text evidence="1">Localizes to cell poles and nucleoid.</text>
</comment>
<comment type="similarity">
    <text evidence="1">Belongs to the RacA family.</text>
</comment>
<reference key="1">
    <citation type="submission" date="2008-10" db="EMBL/GenBank/DDBJ databases">
        <title>Genome sequence of Bacillus cereus B4264.</title>
        <authorList>
            <person name="Dodson R.J."/>
            <person name="Durkin A.S."/>
            <person name="Rosovitz M.J."/>
            <person name="Rasko D.A."/>
            <person name="Hoffmaster A."/>
            <person name="Ravel J."/>
            <person name="Sutton G."/>
        </authorList>
    </citation>
    <scope>NUCLEOTIDE SEQUENCE [LARGE SCALE GENOMIC DNA]</scope>
    <source>
        <strain>B4264</strain>
    </source>
</reference>
<sequence>MEYKTPFIAKKLGVSPKAVVRIAQQLNLTIEKNKYGHFIFTQEDVDQMLEHHRFQIEQSQNSQSTQKASSNEVEELKTQVNTIVQNISSNDFEQLANQLNTITRRLDRMEEQMQDKANDVVTYQLLQHRREMEEMLERIQKLEAALTKEEPIYITPDSKPTYEREKKPKRRKMIFSIFGL</sequence>
<accession>B7H546</accession>
<proteinExistence type="inferred from homology"/>
<gene>
    <name evidence="1" type="primary">racA</name>
    <name type="ordered locus">BCB4264_A2269</name>
</gene>
<organism>
    <name type="scientific">Bacillus cereus (strain B4264)</name>
    <dbReference type="NCBI Taxonomy" id="405532"/>
    <lineage>
        <taxon>Bacteria</taxon>
        <taxon>Bacillati</taxon>
        <taxon>Bacillota</taxon>
        <taxon>Bacilli</taxon>
        <taxon>Bacillales</taxon>
        <taxon>Bacillaceae</taxon>
        <taxon>Bacillus</taxon>
        <taxon>Bacillus cereus group</taxon>
    </lineage>
</organism>